<sequence>MSQPLTVECPTCGAPVEWKSDNKYRPFCSDRCKLIDLGAWAAEEHAIPGDTLEDDIFSADLPPREH</sequence>
<keyword id="KW-0479">Metal-binding</keyword>
<keyword id="KW-0862">Zinc</keyword>
<feature type="chain" id="PRO_1000130968" description="DNA gyrase inhibitor YacG">
    <location>
        <begin position="1"/>
        <end position="66"/>
    </location>
</feature>
<feature type="binding site" evidence="1">
    <location>
        <position position="9"/>
    </location>
    <ligand>
        <name>Zn(2+)</name>
        <dbReference type="ChEBI" id="CHEBI:29105"/>
    </ligand>
</feature>
<feature type="binding site" evidence="1">
    <location>
        <position position="12"/>
    </location>
    <ligand>
        <name>Zn(2+)</name>
        <dbReference type="ChEBI" id="CHEBI:29105"/>
    </ligand>
</feature>
<feature type="binding site" evidence="1">
    <location>
        <position position="28"/>
    </location>
    <ligand>
        <name>Zn(2+)</name>
        <dbReference type="ChEBI" id="CHEBI:29105"/>
    </ligand>
</feature>
<feature type="binding site" evidence="1">
    <location>
        <position position="32"/>
    </location>
    <ligand>
        <name>Zn(2+)</name>
        <dbReference type="ChEBI" id="CHEBI:29105"/>
    </ligand>
</feature>
<reference key="1">
    <citation type="journal article" date="2009" name="Genome Res.">
        <title>Newly introduced genomic prophage islands are critical determinants of in vivo competitiveness in the Liverpool epidemic strain of Pseudomonas aeruginosa.</title>
        <authorList>
            <person name="Winstanley C."/>
            <person name="Langille M.G.I."/>
            <person name="Fothergill J.L."/>
            <person name="Kukavica-Ibrulj I."/>
            <person name="Paradis-Bleau C."/>
            <person name="Sanschagrin F."/>
            <person name="Thomson N.R."/>
            <person name="Winsor G.L."/>
            <person name="Quail M.A."/>
            <person name="Lennard N."/>
            <person name="Bignell A."/>
            <person name="Clarke L."/>
            <person name="Seeger K."/>
            <person name="Saunders D."/>
            <person name="Harris D."/>
            <person name="Parkhill J."/>
            <person name="Hancock R.E.W."/>
            <person name="Brinkman F.S.L."/>
            <person name="Levesque R.C."/>
        </authorList>
    </citation>
    <scope>NUCLEOTIDE SEQUENCE [LARGE SCALE GENOMIC DNA]</scope>
    <source>
        <strain>LESB58</strain>
    </source>
</reference>
<comment type="function">
    <text evidence="1">Inhibits all the catalytic activities of DNA gyrase by preventing its interaction with DNA. Acts by binding directly to the C-terminal domain of GyrB, which probably disrupts DNA binding by the gyrase.</text>
</comment>
<comment type="cofactor">
    <cofactor evidence="1">
        <name>Zn(2+)</name>
        <dbReference type="ChEBI" id="CHEBI:29105"/>
    </cofactor>
    <text evidence="1">Binds 1 zinc ion.</text>
</comment>
<comment type="subunit">
    <text evidence="1">Interacts with GyrB.</text>
</comment>
<comment type="similarity">
    <text evidence="1">Belongs to the DNA gyrase inhibitor YacG family.</text>
</comment>
<gene>
    <name evidence="1" type="primary">yacG</name>
    <name type="ordered locus">PLES_49131</name>
</gene>
<organism>
    <name type="scientific">Pseudomonas aeruginosa (strain LESB58)</name>
    <dbReference type="NCBI Taxonomy" id="557722"/>
    <lineage>
        <taxon>Bacteria</taxon>
        <taxon>Pseudomonadati</taxon>
        <taxon>Pseudomonadota</taxon>
        <taxon>Gammaproteobacteria</taxon>
        <taxon>Pseudomonadales</taxon>
        <taxon>Pseudomonadaceae</taxon>
        <taxon>Pseudomonas</taxon>
    </lineage>
</organism>
<proteinExistence type="inferred from homology"/>
<dbReference type="EMBL" id="FM209186">
    <property type="protein sequence ID" value="CAW29667.1"/>
    <property type="molecule type" value="Genomic_DNA"/>
</dbReference>
<dbReference type="RefSeq" id="WP_003094656.1">
    <property type="nucleotide sequence ID" value="NC_011770.1"/>
</dbReference>
<dbReference type="SMR" id="B7V073"/>
<dbReference type="GeneID" id="77223033"/>
<dbReference type="KEGG" id="pag:PLES_49131"/>
<dbReference type="HOGENOM" id="CLU_178280_3_2_6"/>
<dbReference type="GO" id="GO:0008657">
    <property type="term" value="F:DNA topoisomerase type II (double strand cut, ATP-hydrolyzing) inhibitor activity"/>
    <property type="evidence" value="ECO:0007669"/>
    <property type="project" value="UniProtKB-UniRule"/>
</dbReference>
<dbReference type="GO" id="GO:0008270">
    <property type="term" value="F:zinc ion binding"/>
    <property type="evidence" value="ECO:0007669"/>
    <property type="project" value="UniProtKB-UniRule"/>
</dbReference>
<dbReference type="GO" id="GO:0006355">
    <property type="term" value="P:regulation of DNA-templated transcription"/>
    <property type="evidence" value="ECO:0007669"/>
    <property type="project" value="InterPro"/>
</dbReference>
<dbReference type="Gene3D" id="3.30.50.10">
    <property type="entry name" value="Erythroid Transcription Factor GATA-1, subunit A"/>
    <property type="match status" value="1"/>
</dbReference>
<dbReference type="HAMAP" id="MF_00649">
    <property type="entry name" value="DNA_gyrase_inhibitor_YacG"/>
    <property type="match status" value="1"/>
</dbReference>
<dbReference type="InterPro" id="IPR005584">
    <property type="entry name" value="DNA_gyrase_inhibitor_YacG"/>
</dbReference>
<dbReference type="InterPro" id="IPR013088">
    <property type="entry name" value="Znf_NHR/GATA"/>
</dbReference>
<dbReference type="NCBIfam" id="NF001638">
    <property type="entry name" value="PRK00418.1"/>
    <property type="match status" value="1"/>
</dbReference>
<dbReference type="PANTHER" id="PTHR36150">
    <property type="entry name" value="DNA GYRASE INHIBITOR YACG"/>
    <property type="match status" value="1"/>
</dbReference>
<dbReference type="PANTHER" id="PTHR36150:SF1">
    <property type="entry name" value="DNA GYRASE INHIBITOR YACG"/>
    <property type="match status" value="1"/>
</dbReference>
<dbReference type="Pfam" id="PF03884">
    <property type="entry name" value="YacG"/>
    <property type="match status" value="1"/>
</dbReference>
<dbReference type="SUPFAM" id="SSF57716">
    <property type="entry name" value="Glucocorticoid receptor-like (DNA-binding domain)"/>
    <property type="match status" value="1"/>
</dbReference>
<name>YACG_PSEA8</name>
<evidence type="ECO:0000255" key="1">
    <source>
        <dbReference type="HAMAP-Rule" id="MF_00649"/>
    </source>
</evidence>
<accession>B7V073</accession>
<protein>
    <recommendedName>
        <fullName evidence="1">DNA gyrase inhibitor YacG</fullName>
    </recommendedName>
</protein>